<name>IF32_ARATH</name>
<reference key="1">
    <citation type="journal article" date="1999" name="Nature">
        <title>Sequence and analysis of chromosome 2 of the plant Arabidopsis thaliana.</title>
        <authorList>
            <person name="Lin X."/>
            <person name="Kaul S."/>
            <person name="Rounsley S.D."/>
            <person name="Shea T.P."/>
            <person name="Benito M.-I."/>
            <person name="Town C.D."/>
            <person name="Fujii C.Y."/>
            <person name="Mason T.M."/>
            <person name="Bowman C.L."/>
            <person name="Barnstead M.E."/>
            <person name="Feldblyum T.V."/>
            <person name="Buell C.R."/>
            <person name="Ketchum K.A."/>
            <person name="Lee J.J."/>
            <person name="Ronning C.M."/>
            <person name="Koo H.L."/>
            <person name="Moffat K.S."/>
            <person name="Cronin L.A."/>
            <person name="Shen M."/>
            <person name="Pai G."/>
            <person name="Van Aken S."/>
            <person name="Umayam L."/>
            <person name="Tallon L.J."/>
            <person name="Gill J.E."/>
            <person name="Adams M.D."/>
            <person name="Carrera A.J."/>
            <person name="Creasy T.H."/>
            <person name="Goodman H.M."/>
            <person name="Somerville C.R."/>
            <person name="Copenhaver G.P."/>
            <person name="Preuss D."/>
            <person name="Nierman W.C."/>
            <person name="White O."/>
            <person name="Eisen J.A."/>
            <person name="Salzberg S.L."/>
            <person name="Fraser C.M."/>
            <person name="Venter J.C."/>
        </authorList>
    </citation>
    <scope>NUCLEOTIDE SEQUENCE [LARGE SCALE GENOMIC DNA]</scope>
    <source>
        <strain>cv. Columbia</strain>
    </source>
</reference>
<reference key="2">
    <citation type="journal article" date="2017" name="Plant J.">
        <title>Araport11: a complete reannotation of the Arabidopsis thaliana reference genome.</title>
        <authorList>
            <person name="Cheng C.Y."/>
            <person name="Krishnakumar V."/>
            <person name="Chan A.P."/>
            <person name="Thibaud-Nissen F."/>
            <person name="Schobel S."/>
            <person name="Town C.D."/>
        </authorList>
    </citation>
    <scope>GENOME REANNOTATION</scope>
    <source>
        <strain>cv. Columbia</strain>
    </source>
</reference>
<reference key="3">
    <citation type="journal article" date="2003" name="Science">
        <title>Empirical analysis of transcriptional activity in the Arabidopsis genome.</title>
        <authorList>
            <person name="Yamada K."/>
            <person name="Lim J."/>
            <person name="Dale J.M."/>
            <person name="Chen H."/>
            <person name="Shinn P."/>
            <person name="Palm C.J."/>
            <person name="Southwick A.M."/>
            <person name="Wu H.C."/>
            <person name="Kim C.J."/>
            <person name="Nguyen M."/>
            <person name="Pham P.K."/>
            <person name="Cheuk R.F."/>
            <person name="Karlin-Newmann G."/>
            <person name="Liu S.X."/>
            <person name="Lam B."/>
            <person name="Sakano H."/>
            <person name="Wu T."/>
            <person name="Yu G."/>
            <person name="Miranda M."/>
            <person name="Quach H.L."/>
            <person name="Tripp M."/>
            <person name="Chang C.H."/>
            <person name="Lee J.M."/>
            <person name="Toriumi M.J."/>
            <person name="Chan M.M."/>
            <person name="Tang C.C."/>
            <person name="Onodera C.S."/>
            <person name="Deng J.M."/>
            <person name="Akiyama K."/>
            <person name="Ansari Y."/>
            <person name="Arakawa T."/>
            <person name="Banh J."/>
            <person name="Banno F."/>
            <person name="Bowser L."/>
            <person name="Brooks S.Y."/>
            <person name="Carninci P."/>
            <person name="Chao Q."/>
            <person name="Choy N."/>
            <person name="Enju A."/>
            <person name="Goldsmith A.D."/>
            <person name="Gurjal M."/>
            <person name="Hansen N.F."/>
            <person name="Hayashizaki Y."/>
            <person name="Johnson-Hopson C."/>
            <person name="Hsuan V.W."/>
            <person name="Iida K."/>
            <person name="Karnes M."/>
            <person name="Khan S."/>
            <person name="Koesema E."/>
            <person name="Ishida J."/>
            <person name="Jiang P.X."/>
            <person name="Jones T."/>
            <person name="Kawai J."/>
            <person name="Kamiya A."/>
            <person name="Meyers C."/>
            <person name="Nakajima M."/>
            <person name="Narusaka M."/>
            <person name="Seki M."/>
            <person name="Sakurai T."/>
            <person name="Satou M."/>
            <person name="Tamse R."/>
            <person name="Vaysberg M."/>
            <person name="Wallender E.K."/>
            <person name="Wong C."/>
            <person name="Yamamura Y."/>
            <person name="Yuan S."/>
            <person name="Shinozaki K."/>
            <person name="Davis R.W."/>
            <person name="Theologis A."/>
            <person name="Ecker J.R."/>
        </authorList>
    </citation>
    <scope>NUCLEOTIDE SEQUENCE [LARGE SCALE MRNA]</scope>
    <source>
        <strain>cv. Columbia</strain>
    </source>
</reference>
<reference key="4">
    <citation type="submission" date="2002-03" db="EMBL/GenBank/DDBJ databases">
        <title>Full-length cDNA from Arabidopsis thaliana.</title>
        <authorList>
            <person name="Brover V.V."/>
            <person name="Troukhan M.E."/>
            <person name="Alexandrov N.A."/>
            <person name="Lu Y.-P."/>
            <person name="Flavell R.B."/>
            <person name="Feldmann K.A."/>
        </authorList>
    </citation>
    <scope>NUCLEOTIDE SEQUENCE [LARGE SCALE MRNA]</scope>
</reference>
<reference key="5">
    <citation type="journal article" date="2015" name="Photosyn. Res.">
        <title>Translation initiation factor 3 families: what are their roles in regulating cyanobacterial and chloroplast gene expression?</title>
        <authorList>
            <person name="Nesbit A.D."/>
            <person name="Whippo C."/>
            <person name="Hangarter R.P."/>
            <person name="Kehoe D.M."/>
        </authorList>
    </citation>
    <scope>SUBCELLULAR LOCATION</scope>
</reference>
<reference key="6">
    <citation type="journal article" date="2016" name="Plant Physiol.">
        <title>Chloroplast translation initiation factors regulate leaf variegation and development.</title>
        <authorList>
            <person name="Zheng M."/>
            <person name="Liu X."/>
            <person name="Liang S."/>
            <person name="Fu S."/>
            <person name="Qi Y."/>
            <person name="Zhao J."/>
            <person name="Shao J."/>
            <person name="An L."/>
            <person name="Yu F."/>
        </authorList>
    </citation>
    <scope>FUNCTION</scope>
    <scope>SUBCELLULAR LOCATION</scope>
    <scope>TISSUE SPECIFICITY</scope>
    <scope>DISRUPTION PHENOTYPE</scope>
</reference>
<dbReference type="EMBL" id="AC005170">
    <property type="protein sequence ID" value="AAC63674.1"/>
    <property type="molecule type" value="Genomic_DNA"/>
</dbReference>
<dbReference type="EMBL" id="CP002685">
    <property type="protein sequence ID" value="AEC07524.1"/>
    <property type="molecule type" value="Genomic_DNA"/>
</dbReference>
<dbReference type="EMBL" id="AY072160">
    <property type="protein sequence ID" value="AAL59982.1"/>
    <property type="molecule type" value="mRNA"/>
</dbReference>
<dbReference type="EMBL" id="AY096414">
    <property type="protein sequence ID" value="AAM20054.1"/>
    <property type="molecule type" value="mRNA"/>
</dbReference>
<dbReference type="EMBL" id="AY088131">
    <property type="protein sequence ID" value="AAM65676.1"/>
    <property type="molecule type" value="mRNA"/>
</dbReference>
<dbReference type="PIR" id="B84632">
    <property type="entry name" value="B84632"/>
</dbReference>
<dbReference type="RefSeq" id="NP_179984.1">
    <property type="nucleotide sequence ID" value="NM_127968.3"/>
</dbReference>
<dbReference type="SMR" id="O82234"/>
<dbReference type="FunCoup" id="O82234">
    <property type="interactions" value="1235"/>
</dbReference>
<dbReference type="STRING" id="3702.O82234"/>
<dbReference type="PaxDb" id="3702-AT2G24060.1"/>
<dbReference type="ProteomicsDB" id="228872"/>
<dbReference type="EnsemblPlants" id="AT2G24060.1">
    <property type="protein sequence ID" value="AT2G24060.1"/>
    <property type="gene ID" value="AT2G24060"/>
</dbReference>
<dbReference type="GeneID" id="816940"/>
<dbReference type="Gramene" id="AT2G24060.1">
    <property type="protein sequence ID" value="AT2G24060.1"/>
    <property type="gene ID" value="AT2G24060"/>
</dbReference>
<dbReference type="KEGG" id="ath:AT2G24060"/>
<dbReference type="Araport" id="AT2G24060"/>
<dbReference type="TAIR" id="AT2G24060">
    <property type="gene designation" value="ATINFC-2"/>
</dbReference>
<dbReference type="eggNOG" id="ENOG502QUHV">
    <property type="taxonomic scope" value="Eukaryota"/>
</dbReference>
<dbReference type="HOGENOM" id="CLU_054919_3_1_1"/>
<dbReference type="InParanoid" id="O82234"/>
<dbReference type="OMA" id="IKKPQEP"/>
<dbReference type="OrthoDB" id="21573at2759"/>
<dbReference type="PhylomeDB" id="O82234"/>
<dbReference type="PRO" id="PR:O82234"/>
<dbReference type="Proteomes" id="UP000006548">
    <property type="component" value="Chromosome 2"/>
</dbReference>
<dbReference type="ExpressionAtlas" id="O82234">
    <property type="expression patterns" value="baseline and differential"/>
</dbReference>
<dbReference type="GO" id="GO:0009507">
    <property type="term" value="C:chloroplast"/>
    <property type="evidence" value="ECO:0000314"/>
    <property type="project" value="TAIR"/>
</dbReference>
<dbReference type="GO" id="GO:0005773">
    <property type="term" value="C:vacuole"/>
    <property type="evidence" value="ECO:0007005"/>
    <property type="project" value="TAIR"/>
</dbReference>
<dbReference type="GO" id="GO:0003729">
    <property type="term" value="F:mRNA binding"/>
    <property type="evidence" value="ECO:0000314"/>
    <property type="project" value="TAIR"/>
</dbReference>
<dbReference type="GO" id="GO:0003743">
    <property type="term" value="F:translation initiation factor activity"/>
    <property type="evidence" value="ECO:0000315"/>
    <property type="project" value="TAIR"/>
</dbReference>
<dbReference type="GO" id="GO:0009658">
    <property type="term" value="P:chloroplast organization"/>
    <property type="evidence" value="ECO:0000315"/>
    <property type="project" value="TAIR"/>
</dbReference>
<dbReference type="GO" id="GO:0048366">
    <property type="term" value="P:leaf development"/>
    <property type="evidence" value="ECO:0000315"/>
    <property type="project" value="TAIR"/>
</dbReference>
<dbReference type="FunFam" id="3.10.20.80:FF:000003">
    <property type="entry name" value="Translation initiation factor IF-3"/>
    <property type="match status" value="1"/>
</dbReference>
<dbReference type="FunFam" id="3.30.110.10:FF:000003">
    <property type="entry name" value="Translation initiation factor IF-3"/>
    <property type="match status" value="1"/>
</dbReference>
<dbReference type="Gene3D" id="3.30.110.10">
    <property type="entry name" value="Translation initiation factor 3 (IF-3), C-terminal domain"/>
    <property type="match status" value="1"/>
</dbReference>
<dbReference type="Gene3D" id="3.10.20.80">
    <property type="entry name" value="Translation initiation factor 3 (IF-3), N-terminal domain"/>
    <property type="match status" value="1"/>
</dbReference>
<dbReference type="HAMAP" id="MF_00080">
    <property type="entry name" value="IF_3"/>
    <property type="match status" value="1"/>
</dbReference>
<dbReference type="InterPro" id="IPR036788">
    <property type="entry name" value="T_IF-3_C_sf"/>
</dbReference>
<dbReference type="InterPro" id="IPR036787">
    <property type="entry name" value="T_IF-3_N_sf"/>
</dbReference>
<dbReference type="InterPro" id="IPR019813">
    <property type="entry name" value="Translation_initiation_fac3_CS"/>
</dbReference>
<dbReference type="InterPro" id="IPR001288">
    <property type="entry name" value="Translation_initiation_fac_3"/>
</dbReference>
<dbReference type="InterPro" id="IPR019815">
    <property type="entry name" value="Translation_initiation_fac_3_C"/>
</dbReference>
<dbReference type="InterPro" id="IPR019814">
    <property type="entry name" value="Translation_initiation_fac_3_N"/>
</dbReference>
<dbReference type="NCBIfam" id="TIGR00168">
    <property type="entry name" value="infC"/>
    <property type="match status" value="1"/>
</dbReference>
<dbReference type="PANTHER" id="PTHR10938">
    <property type="entry name" value="TRANSLATION INITIATION FACTOR IF-3"/>
    <property type="match status" value="1"/>
</dbReference>
<dbReference type="PANTHER" id="PTHR10938:SF3">
    <property type="entry name" value="TRANSLATION INITIATION FACTOR IF3-2, CHLOROPLASTIC"/>
    <property type="match status" value="1"/>
</dbReference>
<dbReference type="Pfam" id="PF00707">
    <property type="entry name" value="IF3_C"/>
    <property type="match status" value="1"/>
</dbReference>
<dbReference type="Pfam" id="PF05198">
    <property type="entry name" value="IF3_N"/>
    <property type="match status" value="1"/>
</dbReference>
<dbReference type="SUPFAM" id="SSF55200">
    <property type="entry name" value="Translation initiation factor IF3, C-terminal domain"/>
    <property type="match status" value="1"/>
</dbReference>
<dbReference type="SUPFAM" id="SSF54364">
    <property type="entry name" value="Translation initiation factor IF3, N-terminal domain"/>
    <property type="match status" value="1"/>
</dbReference>
<dbReference type="PROSITE" id="PS00938">
    <property type="entry name" value="IF3"/>
    <property type="match status" value="1"/>
</dbReference>
<accession>O82234</accession>
<evidence type="ECO:0000255" key="1"/>
<evidence type="ECO:0000255" key="2">
    <source>
        <dbReference type="HAMAP-Rule" id="MF_00080"/>
    </source>
</evidence>
<evidence type="ECO:0000256" key="3">
    <source>
        <dbReference type="SAM" id="MobiDB-lite"/>
    </source>
</evidence>
<evidence type="ECO:0000269" key="4">
    <source>
    </source>
</evidence>
<evidence type="ECO:0000269" key="5">
    <source>
    </source>
</evidence>
<evidence type="ECO:0000303" key="6">
    <source>
    </source>
</evidence>
<evidence type="ECO:0000303" key="7">
    <source>
    </source>
</evidence>
<evidence type="ECO:0000305" key="8"/>
<evidence type="ECO:0000312" key="9">
    <source>
        <dbReference type="Araport" id="AT2G24060"/>
    </source>
</evidence>
<sequence>MAGITSSTVGFNAVFTGITKTVSSHSLFSVDSKLCSLRLSKTELSFTNLTPSPRRAFAVTCRFGGGGGGYRFSGDNRRGRPKEAEIDEALDISSIRSATVRLIDGQQNMLGLVSKDEAVRMADDAELDLVILSPDADPPVVKMMDYSKYRYEQQKRKKDQQKKTTRMDLKELKMGYNIDQHDYSVRLRAAQKFLQDGDKVKVIVSMKGRENEFRNIAIELLRRFQTEIGELATEESKNFRDRNMFIILVPNKEMIRKPQEPPTRKKKKTAENEASASAAEITAEPEPEPEPEPEPEPEPEPEPEPEPLQIDS</sequence>
<comment type="function">
    <text evidence="2 5">Chloroplast translation initiation factor that is essential for the coordination of leaf and chloroplast development (PubMed:27535792). IF-3 binds to the 30S ribosomal subunit and shifts the equilibrium between 70S ribosomes and their 50S and 30S subunits in favor of the free subunits, thus enhancing the availability of 30S subunits on which protein synthesis initiation begins (By similarity).</text>
</comment>
<comment type="subunit">
    <text evidence="2">Monomer.</text>
</comment>
<comment type="subcellular location">
    <subcellularLocation>
        <location evidence="4 5">Plastid</location>
        <location evidence="4 5">Chloroplast</location>
    </subcellularLocation>
</comment>
<comment type="tissue specificity">
    <text evidence="5">Highly expressed in young, newly emerged leaves.</text>
</comment>
<comment type="disruption phenotype">
    <text evidence="5">Chloroplast development defect, and leaf developmental abnormalities, such as virescent and serrated leaf phenotype, disorganized mesophyll cells, and altered cotyledon venation patterns.</text>
</comment>
<comment type="similarity">
    <text evidence="2">Belongs to the IF-3 family.</text>
</comment>
<organism>
    <name type="scientific">Arabidopsis thaliana</name>
    <name type="common">Mouse-ear cress</name>
    <dbReference type="NCBI Taxonomy" id="3702"/>
    <lineage>
        <taxon>Eukaryota</taxon>
        <taxon>Viridiplantae</taxon>
        <taxon>Streptophyta</taxon>
        <taxon>Embryophyta</taxon>
        <taxon>Tracheophyta</taxon>
        <taxon>Spermatophyta</taxon>
        <taxon>Magnoliopsida</taxon>
        <taxon>eudicotyledons</taxon>
        <taxon>Gunneridae</taxon>
        <taxon>Pentapetalae</taxon>
        <taxon>rosids</taxon>
        <taxon>malvids</taxon>
        <taxon>Brassicales</taxon>
        <taxon>Brassicaceae</taxon>
        <taxon>Camelineae</taxon>
        <taxon>Arabidopsis</taxon>
    </lineage>
</organism>
<keyword id="KW-0150">Chloroplast</keyword>
<keyword id="KW-0396">Initiation factor</keyword>
<keyword id="KW-0934">Plastid</keyword>
<keyword id="KW-0648">Protein biosynthesis</keyword>
<keyword id="KW-1185">Reference proteome</keyword>
<keyword id="KW-0809">Transit peptide</keyword>
<gene>
    <name evidence="6" type="primary">IF3-2</name>
    <name evidence="7" type="synonym">SVR9</name>
    <name evidence="9" type="ordered locus">At2g24060</name>
</gene>
<protein>
    <recommendedName>
        <fullName evidence="8">Translation initiation factor IF3-2, chloroplastic</fullName>
        <shortName evidence="6">AtIF3-2</shortName>
    </recommendedName>
    <alternativeName>
        <fullName evidence="6">AtINFC-2</fullName>
    </alternativeName>
    <alternativeName>
        <fullName evidence="7">Protein SUPPRESSOR OF VARIEGATION 9</fullName>
    </alternativeName>
</protein>
<feature type="transit peptide" description="Chloroplast" evidence="1">
    <location>
        <begin position="1"/>
        <end position="55"/>
    </location>
</feature>
<feature type="chain" id="PRO_0000439376" description="Translation initiation factor IF3-2, chloroplastic">
    <location>
        <begin position="56"/>
        <end position="312"/>
    </location>
</feature>
<feature type="region of interest" description="Disordered" evidence="3">
    <location>
        <begin position="253"/>
        <end position="312"/>
    </location>
</feature>
<feature type="compositionally biased region" description="Basic and acidic residues" evidence="3">
    <location>
        <begin position="253"/>
        <end position="263"/>
    </location>
</feature>
<feature type="compositionally biased region" description="Low complexity" evidence="3">
    <location>
        <begin position="272"/>
        <end position="282"/>
    </location>
</feature>
<feature type="compositionally biased region" description="Acidic residues" evidence="3">
    <location>
        <begin position="283"/>
        <end position="305"/>
    </location>
</feature>
<proteinExistence type="evidence at transcript level"/>